<organism>
    <name type="scientific">Rattus norvegicus</name>
    <name type="common">Rat</name>
    <dbReference type="NCBI Taxonomy" id="10116"/>
    <lineage>
        <taxon>Eukaryota</taxon>
        <taxon>Metazoa</taxon>
        <taxon>Chordata</taxon>
        <taxon>Craniata</taxon>
        <taxon>Vertebrata</taxon>
        <taxon>Euteleostomi</taxon>
        <taxon>Mammalia</taxon>
        <taxon>Eutheria</taxon>
        <taxon>Euarchontoglires</taxon>
        <taxon>Glires</taxon>
        <taxon>Rodentia</taxon>
        <taxon>Myomorpha</taxon>
        <taxon>Muroidea</taxon>
        <taxon>Muridae</taxon>
        <taxon>Murinae</taxon>
        <taxon>Rattus</taxon>
    </lineage>
</organism>
<gene>
    <name type="primary">S100a8</name>
    <name type="synonym">Mrp8</name>
</gene>
<accession>P50115</accession>
<feature type="initiator methionine" description="Removed" evidence="5">
    <location>
        <position position="1"/>
    </location>
</feature>
<feature type="chain" id="PRO_0000143995" description="Protein S100-A8">
    <location>
        <begin position="2"/>
        <end position="89"/>
    </location>
</feature>
<feature type="domain" description="EF-hand 1" evidence="6">
    <location>
        <begin position="13"/>
        <end position="48"/>
    </location>
</feature>
<feature type="domain" description="EF-hand 2" evidence="3">
    <location>
        <begin position="46"/>
        <end position="81"/>
    </location>
</feature>
<feature type="binding site" evidence="1">
    <location>
        <position position="17"/>
    </location>
    <ligand>
        <name>Zn(2+)</name>
        <dbReference type="ChEBI" id="CHEBI:29105"/>
    </ligand>
</feature>
<feature type="binding site" evidence="1">
    <location>
        <position position="27"/>
    </location>
    <ligand>
        <name>Zn(2+)</name>
        <dbReference type="ChEBI" id="CHEBI:29105"/>
    </ligand>
</feature>
<feature type="binding site" evidence="6">
    <location>
        <position position="33"/>
    </location>
    <ligand>
        <name>Ca(2+)</name>
        <dbReference type="ChEBI" id="CHEBI:29108"/>
        <label>1</label>
        <note>low affinity</note>
    </ligand>
</feature>
<feature type="binding site" evidence="3">
    <location>
        <position position="59"/>
    </location>
    <ligand>
        <name>Ca(2+)</name>
        <dbReference type="ChEBI" id="CHEBI:29108"/>
        <label>2</label>
        <note>high affinity</note>
    </ligand>
</feature>
<feature type="binding site" evidence="3">
    <location>
        <position position="61"/>
    </location>
    <ligand>
        <name>Ca(2+)</name>
        <dbReference type="ChEBI" id="CHEBI:29108"/>
        <label>2</label>
        <note>high affinity</note>
    </ligand>
</feature>
<feature type="binding site" evidence="3">
    <location>
        <position position="63"/>
    </location>
    <ligand>
        <name>Ca(2+)</name>
        <dbReference type="ChEBI" id="CHEBI:29108"/>
        <label>2</label>
        <note>high affinity</note>
    </ligand>
</feature>
<feature type="binding site" evidence="3">
    <location>
        <position position="70"/>
    </location>
    <ligand>
        <name>Ca(2+)</name>
        <dbReference type="ChEBI" id="CHEBI:29108"/>
        <label>2</label>
        <note>high affinity</note>
    </ligand>
</feature>
<feature type="binding site" evidence="1">
    <location>
        <position position="83"/>
    </location>
    <ligand>
        <name>Zn(2+)</name>
        <dbReference type="ChEBI" id="CHEBI:29105"/>
    </ligand>
</feature>
<feature type="modified residue" description="N-acetylalanine" evidence="5">
    <location>
        <position position="2"/>
    </location>
</feature>
<feature type="modified residue" description="S-nitrosocysteine" evidence="2">
    <location>
        <position position="42"/>
    </location>
</feature>
<feature type="sequence conflict" description="In Ref. 1; AAA41637." evidence="6" ref="1">
    <original>V</original>
    <variation>A</variation>
    <location>
        <position position="73"/>
    </location>
</feature>
<protein>
    <recommendedName>
        <fullName>Protein S100-A8</fullName>
    </recommendedName>
    <alternativeName>
        <fullName>Calgranulin-A</fullName>
    </alternativeName>
    <alternativeName>
        <fullName>Migration inhibitory factor-related protein 8</fullName>
        <shortName>MRP-8</shortName>
        <shortName>p8</shortName>
    </alternativeName>
    <alternativeName>
        <fullName>S100 calcium-binding protein A8</fullName>
    </alternativeName>
</protein>
<comment type="function">
    <text evidence="2 4">S100A8 is a calcium- and zinc-binding protein which plays a prominent role in the regulation of inflammatory processes and immune response. It can induce neutrophil chemotaxis and adhesion. Predominantly found as calprotectin (S100A8/A9) which has a wide plethora of intra- and extracellular functions. The intracellular functions include: facilitating leukocyte arachidonic acid trafficking and metabolism, modulation of the tubulin-dependent cytoskeleton during migration of phagocytes and activation of the neutrophilic NADPH-oxidase. Also participates in regulatory T-cell differentiation together with CD69. Activates NADPH-oxidase by facilitating the enzyme complex assembly at the cell membrane, transferring arachidonic acid, an essential cofactor, to the enzyme complex and S100A8 contributes to the enzyme assembly by directly binding to NCF2/P67PHOX. The extracellular functions involve pro-inflammatory, antimicrobial, oxidant-scavenging and apoptosis-inducing activities. Its pro-inflammatory activity includes recruitment of leukocytes, promotion of cytokine and chemokine production, and regulation of leukocyte adhesion and migration. Acts as an alarmin or a danger associated molecular pattern (DAMP) molecule and stimulates innate immune cells via binding to pattern recognition receptors such as Toll-like receptor 4 (TLR4) and receptor for advanced glycation endproducts (AGER). Binding to TLR4 and AGER activates the MAP-kinase and NF-kappa-B signaling pathways resulting in the amplification of the pro-inflammatory cascade. Has antimicrobial activity towards bacteria and fungi and exerts its antimicrobial activity probably via chelation of Zn(2+) which is essential for microbial growth. Can induce cell death via autophagy and apoptosis and this occurs through the cross-talk of mitochondria and lysosomes via reactive oxygen species (ROS) and the process involves BNIP3. Can regulate neutrophil number and apoptosis by an anti-apoptotic effect; regulates cell survival via ITGAM/ITGB and TLR4 and a signaling mechanism involving MEK-ERK. Its role as an oxidant scavenger has a protective role in preventing exaggerated tissue damage by scavenging oxidants. The iNOS-S100A8/A9 transnitrosylase complex is proposed to direct selective inflammatory stimulus-dependent S-nitrosylation of multiple targets such as GAPDH, ANXA5, EZR, MSN and VIM by recognizing a [IL]-x-C-x-x-[DE] motif; S100A8 seems to contribute to S-nitrosylation site selectivity (By similarity).</text>
</comment>
<comment type="subunit">
    <text evidence="1 2">Homodimer. Preferentially exists as a heterodimer or heterotetramer with S100A9 known as calprotectin (S100A8/A9). S100A8 interacts with AGER, ATP2A2 and with the heterodimeric complex formed by TLR4 and LY96. Calprotectin (S100A8/9) interacts with CEACAM3 and tubulin filaments in a calcium-dependent manner. Heterotetrameric calprotectin (S100A8/A9) interacts with ANXA6 and associates with tubulin filaments in activated monocytes. S100A8 and calprotectin (S100A8/9) interact with NCF2/P67PHOX, RAC1 and RAC2. Calprotectin (S100A8/9) interacts with CYBA and CYBB (By similarity). Calprotectin (S100A8/9) interacts with NOS2 to form the iNOS-S100A8/A9 transnitrosylase complex (By similarity). Calprotectin (S100A8/9) interacts with CD69 (By similarity).</text>
</comment>
<comment type="subcellular location">
    <subcellularLocation>
        <location evidence="1">Secreted</location>
    </subcellularLocation>
    <subcellularLocation>
        <location evidence="4">Cytoplasm</location>
    </subcellularLocation>
    <subcellularLocation>
        <location evidence="1">Cytoplasm</location>
        <location evidence="1">Cytoskeleton</location>
    </subcellularLocation>
    <subcellularLocation>
        <location evidence="1">Cell membrane</location>
        <topology evidence="1">Peripheral membrane protein</topology>
    </subcellularLocation>
    <text evidence="1">Predominantly localized in the cytoplasm. Upon elevation of the intracellular calcium level, translocated from the cytoplasm to the cytoskeleton and the cell membrane. Upon neutrophil activation or endothelial adhesion of monocytes, is secreted via a microtubule-mediated, alternative pathway (By similarity).</text>
</comment>
<comment type="mass spectrometry" mass="10149.0" error="2.0" method="Electrospray" evidence="5"/>
<comment type="miscellaneous">
    <text evidence="1">Binds two calcium ions per molecule with an affinity similar to that of the S100 proteins.</text>
</comment>
<comment type="similarity">
    <text evidence="6">Belongs to the S-100 family.</text>
</comment>
<dbReference type="EMBL" id="L18891">
    <property type="protein sequence ID" value="AAA41637.1"/>
    <property type="molecule type" value="mRNA"/>
</dbReference>
<dbReference type="PIR" id="JN0685">
    <property type="entry name" value="JN0685"/>
</dbReference>
<dbReference type="RefSeq" id="NP_446274.2">
    <property type="nucleotide sequence ID" value="NM_053822.2"/>
</dbReference>
<dbReference type="RefSeq" id="XP_006232627.1">
    <property type="nucleotide sequence ID" value="XM_006232565.4"/>
</dbReference>
<dbReference type="SMR" id="P50115"/>
<dbReference type="FunCoup" id="P50115">
    <property type="interactions" value="88"/>
</dbReference>
<dbReference type="STRING" id="10116.ENSRNOP00000015473"/>
<dbReference type="iPTMnet" id="P50115"/>
<dbReference type="PhosphoSitePlus" id="P50115"/>
<dbReference type="PaxDb" id="10116-ENSRNOP00000015473"/>
<dbReference type="Ensembl" id="ENSRNOT00000015473.4">
    <property type="protein sequence ID" value="ENSRNOP00000015473.1"/>
    <property type="gene ID" value="ENSRNOG00000011557.4"/>
</dbReference>
<dbReference type="GeneID" id="116547"/>
<dbReference type="KEGG" id="rno:116547"/>
<dbReference type="AGR" id="RGD:620265"/>
<dbReference type="CTD" id="6279"/>
<dbReference type="RGD" id="620265">
    <property type="gene designation" value="S100a8"/>
</dbReference>
<dbReference type="eggNOG" id="ENOG502SA01">
    <property type="taxonomic scope" value="Eukaryota"/>
</dbReference>
<dbReference type="GeneTree" id="ENSGT00910000144329"/>
<dbReference type="HOGENOM" id="CLU_138624_6_0_1"/>
<dbReference type="InParanoid" id="P50115"/>
<dbReference type="OMA" id="NYHAIYR"/>
<dbReference type="OrthoDB" id="26525at2759"/>
<dbReference type="PhylomeDB" id="P50115"/>
<dbReference type="TreeFam" id="TF332727"/>
<dbReference type="Reactome" id="R-RNO-5668599">
    <property type="pathway name" value="RHO GTPases Activate NADPH Oxidases"/>
</dbReference>
<dbReference type="Reactome" id="R-RNO-5686938">
    <property type="pathway name" value="Regulation of TLR by endogenous ligand"/>
</dbReference>
<dbReference type="Reactome" id="R-RNO-6798695">
    <property type="pathway name" value="Neutrophil degranulation"/>
</dbReference>
<dbReference type="Reactome" id="R-RNO-6799990">
    <property type="pathway name" value="Metal sequestration by antimicrobial proteins"/>
</dbReference>
<dbReference type="PRO" id="PR:P50115"/>
<dbReference type="Proteomes" id="UP000002494">
    <property type="component" value="Chromosome 2"/>
</dbReference>
<dbReference type="Bgee" id="ENSRNOG00000011557">
    <property type="expression patterns" value="Expressed in thymus and 17 other cell types or tissues"/>
</dbReference>
<dbReference type="GO" id="GO:1990660">
    <property type="term" value="C:calprotectin complex"/>
    <property type="evidence" value="ECO:0000266"/>
    <property type="project" value="RGD"/>
</dbReference>
<dbReference type="GO" id="GO:0005737">
    <property type="term" value="C:cytoplasm"/>
    <property type="evidence" value="ECO:0000318"/>
    <property type="project" value="GO_Central"/>
</dbReference>
<dbReference type="GO" id="GO:0005829">
    <property type="term" value="C:cytosol"/>
    <property type="evidence" value="ECO:0007669"/>
    <property type="project" value="Ensembl"/>
</dbReference>
<dbReference type="GO" id="GO:0005615">
    <property type="term" value="C:extracellular space"/>
    <property type="evidence" value="ECO:0000314"/>
    <property type="project" value="RGD"/>
</dbReference>
<dbReference type="GO" id="GO:0045111">
    <property type="term" value="C:intermediate filament cytoskeleton"/>
    <property type="evidence" value="ECO:0007669"/>
    <property type="project" value="Ensembl"/>
</dbReference>
<dbReference type="GO" id="GO:0005886">
    <property type="term" value="C:plasma membrane"/>
    <property type="evidence" value="ECO:0007669"/>
    <property type="project" value="UniProtKB-SubCell"/>
</dbReference>
<dbReference type="GO" id="GO:1990661">
    <property type="term" value="C:S100A8 complex"/>
    <property type="evidence" value="ECO:0000266"/>
    <property type="project" value="RGD"/>
</dbReference>
<dbReference type="GO" id="GO:0016209">
    <property type="term" value="F:antioxidant activity"/>
    <property type="evidence" value="ECO:0007669"/>
    <property type="project" value="UniProtKB-KW"/>
</dbReference>
<dbReference type="GO" id="GO:0005509">
    <property type="term" value="F:calcium ion binding"/>
    <property type="evidence" value="ECO:0000318"/>
    <property type="project" value="GO_Central"/>
</dbReference>
<dbReference type="GO" id="GO:0048306">
    <property type="term" value="F:calcium-dependent protein binding"/>
    <property type="evidence" value="ECO:0000318"/>
    <property type="project" value="GO_Central"/>
</dbReference>
<dbReference type="GO" id="GO:0006915">
    <property type="term" value="P:apoptotic process"/>
    <property type="evidence" value="ECO:0007669"/>
    <property type="project" value="UniProtKB-KW"/>
</dbReference>
<dbReference type="GO" id="GO:0014002">
    <property type="term" value="P:astrocyte development"/>
    <property type="evidence" value="ECO:0000266"/>
    <property type="project" value="RGD"/>
</dbReference>
<dbReference type="GO" id="GO:0035425">
    <property type="term" value="P:autocrine signaling"/>
    <property type="evidence" value="ECO:0000316"/>
    <property type="project" value="ARUK-UCL"/>
</dbReference>
<dbReference type="GO" id="GO:0006914">
    <property type="term" value="P:autophagy"/>
    <property type="evidence" value="ECO:0000250"/>
    <property type="project" value="UniProtKB"/>
</dbReference>
<dbReference type="GO" id="GO:0002544">
    <property type="term" value="P:chronic inflammatory response"/>
    <property type="evidence" value="ECO:0000270"/>
    <property type="project" value="RGD"/>
</dbReference>
<dbReference type="GO" id="GO:0043542">
    <property type="term" value="P:endothelial cell migration"/>
    <property type="evidence" value="ECO:0000318"/>
    <property type="project" value="GO_Central"/>
</dbReference>
<dbReference type="GO" id="GO:0045087">
    <property type="term" value="P:innate immune response"/>
    <property type="evidence" value="ECO:0007669"/>
    <property type="project" value="UniProtKB-KW"/>
</dbReference>
<dbReference type="GO" id="GO:0002523">
    <property type="term" value="P:leukocyte migration involved in inflammatory response"/>
    <property type="evidence" value="ECO:0000250"/>
    <property type="project" value="UniProtKB"/>
</dbReference>
<dbReference type="GO" id="GO:0070488">
    <property type="term" value="P:neutrophil aggregation"/>
    <property type="evidence" value="ECO:0000250"/>
    <property type="project" value="UniProtKB"/>
</dbReference>
<dbReference type="GO" id="GO:0030593">
    <property type="term" value="P:neutrophil chemotaxis"/>
    <property type="evidence" value="ECO:0000250"/>
    <property type="project" value="UniProtKB"/>
</dbReference>
<dbReference type="GO" id="GO:0002790">
    <property type="term" value="P:peptide secretion"/>
    <property type="evidence" value="ECO:0000266"/>
    <property type="project" value="RGD"/>
</dbReference>
<dbReference type="GO" id="GO:0050729">
    <property type="term" value="P:positive regulation of inflammatory response"/>
    <property type="evidence" value="ECO:0000250"/>
    <property type="project" value="UniProtKB"/>
</dbReference>
<dbReference type="GO" id="GO:2001244">
    <property type="term" value="P:positive regulation of intrinsic apoptotic signaling pathway"/>
    <property type="evidence" value="ECO:0000250"/>
    <property type="project" value="UniProtKB"/>
</dbReference>
<dbReference type="GO" id="GO:0002793">
    <property type="term" value="P:positive regulation of peptide secretion"/>
    <property type="evidence" value="ECO:0000266"/>
    <property type="project" value="RGD"/>
</dbReference>
<dbReference type="GO" id="GO:0045471">
    <property type="term" value="P:response to ethanol"/>
    <property type="evidence" value="ECO:0000270"/>
    <property type="project" value="RGD"/>
</dbReference>
<dbReference type="GO" id="GO:0032496">
    <property type="term" value="P:response to lipopolysaccharide"/>
    <property type="evidence" value="ECO:0000270"/>
    <property type="project" value="RGD"/>
</dbReference>
<dbReference type="GO" id="GO:0010043">
    <property type="term" value="P:response to zinc ion"/>
    <property type="evidence" value="ECO:0000270"/>
    <property type="project" value="RGD"/>
</dbReference>
<dbReference type="CDD" id="cd05030">
    <property type="entry name" value="calgranulins"/>
    <property type="match status" value="1"/>
</dbReference>
<dbReference type="Gene3D" id="1.10.238.10">
    <property type="entry name" value="EF-hand"/>
    <property type="match status" value="1"/>
</dbReference>
<dbReference type="InterPro" id="IPR011992">
    <property type="entry name" value="EF-hand-dom_pair"/>
</dbReference>
<dbReference type="InterPro" id="IPR018247">
    <property type="entry name" value="EF_Hand_1_Ca_BS"/>
</dbReference>
<dbReference type="InterPro" id="IPR002048">
    <property type="entry name" value="EF_hand_dom"/>
</dbReference>
<dbReference type="InterPro" id="IPR001751">
    <property type="entry name" value="S100/CaBP7/8-like_CS"/>
</dbReference>
<dbReference type="InterPro" id="IPR013787">
    <property type="entry name" value="S100_Ca-bd_sub"/>
</dbReference>
<dbReference type="PANTHER" id="PTHR11639:SF5">
    <property type="entry name" value="PROTEIN S100-A8"/>
    <property type="match status" value="1"/>
</dbReference>
<dbReference type="PANTHER" id="PTHR11639">
    <property type="entry name" value="S100 CALCIUM-BINDING PROTEIN"/>
    <property type="match status" value="1"/>
</dbReference>
<dbReference type="Pfam" id="PF01023">
    <property type="entry name" value="S_100"/>
    <property type="match status" value="1"/>
</dbReference>
<dbReference type="SMART" id="SM01394">
    <property type="entry name" value="S_100"/>
    <property type="match status" value="1"/>
</dbReference>
<dbReference type="SUPFAM" id="SSF47473">
    <property type="entry name" value="EF-hand"/>
    <property type="match status" value="1"/>
</dbReference>
<dbReference type="PROSITE" id="PS00018">
    <property type="entry name" value="EF_HAND_1"/>
    <property type="match status" value="1"/>
</dbReference>
<dbReference type="PROSITE" id="PS50222">
    <property type="entry name" value="EF_HAND_2"/>
    <property type="match status" value="1"/>
</dbReference>
<dbReference type="PROSITE" id="PS00303">
    <property type="entry name" value="S100_CABP"/>
    <property type="match status" value="1"/>
</dbReference>
<proteinExistence type="evidence at protein level"/>
<keyword id="KW-0007">Acetylation</keyword>
<keyword id="KW-0929">Antimicrobial</keyword>
<keyword id="KW-0049">Antioxidant</keyword>
<keyword id="KW-0053">Apoptosis</keyword>
<keyword id="KW-0072">Autophagy</keyword>
<keyword id="KW-0106">Calcium</keyword>
<keyword id="KW-1003">Cell membrane</keyword>
<keyword id="KW-0145">Chemotaxis</keyword>
<keyword id="KW-0963">Cytoplasm</keyword>
<keyword id="KW-0206">Cytoskeleton</keyword>
<keyword id="KW-0903">Direct protein sequencing</keyword>
<keyword id="KW-0391">Immunity</keyword>
<keyword id="KW-0395">Inflammatory response</keyword>
<keyword id="KW-0399">Innate immunity</keyword>
<keyword id="KW-0472">Membrane</keyword>
<keyword id="KW-0479">Metal-binding</keyword>
<keyword id="KW-1185">Reference proteome</keyword>
<keyword id="KW-0677">Repeat</keyword>
<keyword id="KW-0702">S-nitrosylation</keyword>
<keyword id="KW-0964">Secreted</keyword>
<keyword id="KW-0862">Zinc</keyword>
<name>S10A8_RAT</name>
<evidence type="ECO:0000250" key="1"/>
<evidence type="ECO:0000250" key="2">
    <source>
        <dbReference type="UniProtKB" id="P05109"/>
    </source>
</evidence>
<evidence type="ECO:0000255" key="3">
    <source>
        <dbReference type="PROSITE-ProRule" id="PRU00448"/>
    </source>
</evidence>
<evidence type="ECO:0000269" key="4">
    <source>
    </source>
</evidence>
<evidence type="ECO:0000269" key="5">
    <source>
    </source>
</evidence>
<evidence type="ECO:0000305" key="6"/>
<reference key="1">
    <citation type="journal article" date="1993" name="Biochem. Biophys. Res. Commun.">
        <title>Expression and cloning of migration inhibitory factor-related protein (MRP)8 and MRP14 in arthritis-susceptible rats.</title>
        <authorList>
            <person name="Imamichi T."/>
            <person name="Uchida I."/>
            <person name="Wahl S.M."/>
            <person name="McCartney-Francis N."/>
        </authorList>
    </citation>
    <scope>NUCLEOTIDE SEQUENCE [MRNA]</scope>
    <source>
        <strain>Lewis/N</strain>
        <tissue>Peritoneal cavity</tissue>
    </source>
</reference>
<reference key="2">
    <citation type="journal article" date="1998" name="Anal. Biochem.">
        <title>Identification of posttranslational modifications and cDNA sequencing errors in the rat S100 proteins MRP8 and 14 using electrospray ionization mass spectrometry.</title>
        <authorList>
            <person name="Raftery M.J."/>
            <person name="Geczy C.L."/>
        </authorList>
    </citation>
    <scope>PROTEIN SEQUENCE OF 2-89</scope>
    <scope>MASS SPECTROMETRY</scope>
    <scope>ACETYLATION AT ALA-2</scope>
    <source>
        <tissue>Spleen</tissue>
    </source>
</reference>
<reference key="3">
    <citation type="journal article" date="2012" name="Inflammation">
        <title>Dynamic mobility of immunological cells expressing S100A8 and S100A9 in vivo: a variety of functional roles of the two proteins as regulators in acute inflammatory reaction.</title>
        <authorList>
            <person name="Koike A."/>
            <person name="Arai S."/>
            <person name="Yamada S."/>
            <person name="Nagae A."/>
            <person name="Saita N."/>
            <person name="Itoh H."/>
            <person name="Uemoto S."/>
            <person name="Totani M."/>
            <person name="Ikemoto M."/>
        </authorList>
    </citation>
    <scope>FUNCTION</scope>
    <scope>SUBCELLULAR LOCATION</scope>
</reference>
<sequence length="89" mass="10239">MATELEKALSNVIEVYHNYSGIKGNHHALYRDDFRKMVTTECPQFVQNKNTESLFKELDVNSDNAINFEEFLVLVIRVGVAAHKDSHKE</sequence>